<name>TIM16_EREGS</name>
<protein>
    <recommendedName>
        <fullName>Mitochondrial import inner membrane translocase subunit TIM16</fullName>
    </recommendedName>
    <alternativeName>
        <fullName>Presequence translocated-associated motor subunit PAM16</fullName>
    </alternativeName>
</protein>
<keyword id="KW-0472">Membrane</keyword>
<keyword id="KW-0496">Mitochondrion</keyword>
<keyword id="KW-0999">Mitochondrion inner membrane</keyword>
<keyword id="KW-0653">Protein transport</keyword>
<keyword id="KW-1185">Reference proteome</keyword>
<keyword id="KW-0811">Translocation</keyword>
<keyword id="KW-0813">Transport</keyword>
<reference key="1">
    <citation type="journal article" date="2004" name="Science">
        <title>The Ashbya gossypii genome as a tool for mapping the ancient Saccharomyces cerevisiae genome.</title>
        <authorList>
            <person name="Dietrich F.S."/>
            <person name="Voegeli S."/>
            <person name="Brachat S."/>
            <person name="Lerch A."/>
            <person name="Gates K."/>
            <person name="Steiner S."/>
            <person name="Mohr C."/>
            <person name="Poehlmann R."/>
            <person name="Luedi P."/>
            <person name="Choi S."/>
            <person name="Wing R.A."/>
            <person name="Flavier A."/>
            <person name="Gaffney T.D."/>
            <person name="Philippsen P."/>
        </authorList>
    </citation>
    <scope>NUCLEOTIDE SEQUENCE [LARGE SCALE GENOMIC DNA]</scope>
    <source>
        <strain>ATCC 10895 / CBS 109.51 / FGSC 9923 / NRRL Y-1056</strain>
    </source>
</reference>
<reference key="2">
    <citation type="journal article" date="2013" name="G3 (Bethesda)">
        <title>Genomes of Ashbya fungi isolated from insects reveal four mating-type loci, numerous translocations, lack of transposons, and distinct gene duplications.</title>
        <authorList>
            <person name="Dietrich F.S."/>
            <person name="Voegeli S."/>
            <person name="Kuo S."/>
            <person name="Philippsen P."/>
        </authorList>
    </citation>
    <scope>GENOME REANNOTATION</scope>
    <scope>SEQUENCE REVISION TO 76 AND 78</scope>
    <source>
        <strain>ATCC 10895 / CBS 109.51 / FGSC 9923 / NRRL Y-1056</strain>
    </source>
</reference>
<gene>
    <name type="primary">PAM16</name>
    <name type="synonym">TIM16</name>
    <name type="ordered locus">AFR078W</name>
</gene>
<sequence>MAHRVLVQVIFTGARVFGRAFTEAYKQTAAQMAKQGTSSAARSQGGMTNEYGGITLDESCKILNIEENGPEMNLDKVEQRFKYLFDINDKEKGGSFYLQSKIYRAAERLKWELAQREQADKGASAHPQDQQPGPQN</sequence>
<organism>
    <name type="scientific">Eremothecium gossypii (strain ATCC 10895 / CBS 109.51 / FGSC 9923 / NRRL Y-1056)</name>
    <name type="common">Yeast</name>
    <name type="synonym">Ashbya gossypii</name>
    <dbReference type="NCBI Taxonomy" id="284811"/>
    <lineage>
        <taxon>Eukaryota</taxon>
        <taxon>Fungi</taxon>
        <taxon>Dikarya</taxon>
        <taxon>Ascomycota</taxon>
        <taxon>Saccharomycotina</taxon>
        <taxon>Saccharomycetes</taxon>
        <taxon>Saccharomycetales</taxon>
        <taxon>Saccharomycetaceae</taxon>
        <taxon>Eremothecium</taxon>
    </lineage>
</organism>
<feature type="chain" id="PRO_0000214088" description="Mitochondrial import inner membrane translocase subunit TIM16">
    <location>
        <begin position="1"/>
        <end position="136"/>
    </location>
</feature>
<feature type="region of interest" description="J-like">
    <location>
        <begin position="58"/>
        <end position="114"/>
    </location>
</feature>
<feature type="region of interest" description="Disordered" evidence="2">
    <location>
        <begin position="114"/>
        <end position="136"/>
    </location>
</feature>
<feature type="compositionally biased region" description="Polar residues" evidence="2">
    <location>
        <begin position="127"/>
        <end position="136"/>
    </location>
</feature>
<dbReference type="EMBL" id="AE016819">
    <property type="protein sequence ID" value="AAS53449.2"/>
    <property type="molecule type" value="Genomic_DNA"/>
</dbReference>
<dbReference type="RefSeq" id="NP_985625.2">
    <property type="nucleotide sequence ID" value="NM_210979.2"/>
</dbReference>
<dbReference type="SMR" id="Q754J4"/>
<dbReference type="FunCoup" id="Q754J4">
    <property type="interactions" value="262"/>
</dbReference>
<dbReference type="STRING" id="284811.Q754J4"/>
<dbReference type="EnsemblFungi" id="AAS53449">
    <property type="protein sequence ID" value="AAS53449"/>
    <property type="gene ID" value="AGOS_AFR078W"/>
</dbReference>
<dbReference type="GeneID" id="4621867"/>
<dbReference type="KEGG" id="ago:AGOS_AFR078W"/>
<dbReference type="eggNOG" id="KOG3442">
    <property type="taxonomic scope" value="Eukaryota"/>
</dbReference>
<dbReference type="HOGENOM" id="CLU_101461_0_1_1"/>
<dbReference type="InParanoid" id="Q754J4"/>
<dbReference type="OMA" id="RMFKIND"/>
<dbReference type="OrthoDB" id="10262892at2759"/>
<dbReference type="Proteomes" id="UP000000591">
    <property type="component" value="Chromosome VI"/>
</dbReference>
<dbReference type="GO" id="GO:0001405">
    <property type="term" value="C:PAM complex, Tim23 associated import motor"/>
    <property type="evidence" value="ECO:0007669"/>
    <property type="project" value="EnsemblFungi"/>
</dbReference>
<dbReference type="GO" id="GO:0005744">
    <property type="term" value="C:TIM23 mitochondrial import inner membrane translocase complex"/>
    <property type="evidence" value="ECO:0000318"/>
    <property type="project" value="GO_Central"/>
</dbReference>
<dbReference type="GO" id="GO:0019904">
    <property type="term" value="F:protein domain specific binding"/>
    <property type="evidence" value="ECO:0007669"/>
    <property type="project" value="EnsemblFungi"/>
</dbReference>
<dbReference type="GO" id="GO:0030150">
    <property type="term" value="P:protein import into mitochondrial matrix"/>
    <property type="evidence" value="ECO:0000318"/>
    <property type="project" value="GO_Central"/>
</dbReference>
<dbReference type="FunFam" id="1.10.287.110:FF:000006">
    <property type="entry name" value="Import inner membrane translocase subunit TIM16"/>
    <property type="match status" value="1"/>
</dbReference>
<dbReference type="Gene3D" id="1.10.287.110">
    <property type="entry name" value="DnaJ domain"/>
    <property type="match status" value="1"/>
</dbReference>
<dbReference type="InterPro" id="IPR036869">
    <property type="entry name" value="J_dom_sf"/>
</dbReference>
<dbReference type="InterPro" id="IPR005341">
    <property type="entry name" value="Tim16"/>
</dbReference>
<dbReference type="PANTHER" id="PTHR12388">
    <property type="entry name" value="MITOCHONDRIA ASSOCIATED GRANULOCYTE MACROPHAGE CSF SIGNALING MOLECULE"/>
    <property type="match status" value="1"/>
</dbReference>
<dbReference type="PANTHER" id="PTHR12388:SF0">
    <property type="entry name" value="MITOCHONDRIAL IMPORT INNER MEMBRANE TRANSLOCASE SUBUNIT TIM16"/>
    <property type="match status" value="1"/>
</dbReference>
<dbReference type="Pfam" id="PF03656">
    <property type="entry name" value="Pam16"/>
    <property type="match status" value="1"/>
</dbReference>
<comment type="function">
    <text evidence="1">Essential component of the PAM complex, a complex required for the translocation of transit peptide-containing proteins from the inner membrane into the mitochondrial matrix in an ATP-dependent manner. In the complex, it is required to regulate activity of mtHSP70 (SSC1) via its interaction with PAM18/TIM14. May act by positioning PAM18/TIM14 in juxtaposition to mtHSP70 at the translocon to maximize ATPase stimulation (By similarity).</text>
</comment>
<comment type="subunit">
    <text evidence="1">Heterodimer with PAM18. Component of the PAM complex, at least composed of mtHsp70, MGE1, TIM44, PAM16, PAM17 and PAM18 (By similarity).</text>
</comment>
<comment type="subcellular location">
    <subcellularLocation>
        <location evidence="1">Mitochondrion inner membrane</location>
        <topology evidence="1">Peripheral membrane protein</topology>
    </subcellularLocation>
</comment>
<comment type="domain">
    <text evidence="1">The J-like region, although related to the J domain does not stimulate ATPase activity of mtHSP70. It nevertheless mediates the heterodimerization with the J domain of PAM18 and is therefore essential for PAM complex function (By similarity).</text>
</comment>
<comment type="similarity">
    <text evidence="3">Belongs to the TIM16/PAM16 family.</text>
</comment>
<proteinExistence type="inferred from homology"/>
<evidence type="ECO:0000250" key="1"/>
<evidence type="ECO:0000256" key="2">
    <source>
        <dbReference type="SAM" id="MobiDB-lite"/>
    </source>
</evidence>
<evidence type="ECO:0000305" key="3"/>
<accession>Q754J4</accession>